<comment type="function">
    <text evidence="1">Formation of pseudouridine at positions 38, 39 and 40 in the anticodon stem and loop of transfer RNAs.</text>
</comment>
<comment type="catalytic activity">
    <reaction evidence="1">
        <text>uridine(38/39/40) in tRNA = pseudouridine(38/39/40) in tRNA</text>
        <dbReference type="Rhea" id="RHEA:22376"/>
        <dbReference type="Rhea" id="RHEA-COMP:10085"/>
        <dbReference type="Rhea" id="RHEA-COMP:10087"/>
        <dbReference type="ChEBI" id="CHEBI:65314"/>
        <dbReference type="ChEBI" id="CHEBI:65315"/>
        <dbReference type="EC" id="5.4.99.12"/>
    </reaction>
</comment>
<comment type="subunit">
    <text evidence="1">Homodimer.</text>
</comment>
<comment type="similarity">
    <text evidence="1">Belongs to the tRNA pseudouridine synthase TruA family.</text>
</comment>
<proteinExistence type="inferred from homology"/>
<dbReference type="EC" id="5.4.99.12" evidence="1"/>
<dbReference type="EMBL" id="AL596173">
    <property type="protein sequence ID" value="CAC97973.1"/>
    <property type="molecule type" value="Genomic_DNA"/>
</dbReference>
<dbReference type="PIR" id="AE1775">
    <property type="entry name" value="AE1775"/>
</dbReference>
<dbReference type="RefSeq" id="WP_003764107.1">
    <property type="nucleotide sequence ID" value="NC_003212.1"/>
</dbReference>
<dbReference type="SMR" id="Q927P1"/>
<dbReference type="STRING" id="272626.gene:17567134"/>
<dbReference type="GeneID" id="93236020"/>
<dbReference type="KEGG" id="lin:truA"/>
<dbReference type="eggNOG" id="COG0101">
    <property type="taxonomic scope" value="Bacteria"/>
</dbReference>
<dbReference type="HOGENOM" id="CLU_014673_0_1_9"/>
<dbReference type="OrthoDB" id="9811823at2"/>
<dbReference type="Proteomes" id="UP000002513">
    <property type="component" value="Chromosome"/>
</dbReference>
<dbReference type="GO" id="GO:0003723">
    <property type="term" value="F:RNA binding"/>
    <property type="evidence" value="ECO:0007669"/>
    <property type="project" value="InterPro"/>
</dbReference>
<dbReference type="GO" id="GO:0160147">
    <property type="term" value="F:tRNA pseudouridine(38-40) synthase activity"/>
    <property type="evidence" value="ECO:0007669"/>
    <property type="project" value="UniProtKB-EC"/>
</dbReference>
<dbReference type="GO" id="GO:0031119">
    <property type="term" value="P:tRNA pseudouridine synthesis"/>
    <property type="evidence" value="ECO:0007669"/>
    <property type="project" value="UniProtKB-UniRule"/>
</dbReference>
<dbReference type="CDD" id="cd02570">
    <property type="entry name" value="PseudoU_synth_EcTruA"/>
    <property type="match status" value="1"/>
</dbReference>
<dbReference type="FunFam" id="3.30.70.580:FF:000001">
    <property type="entry name" value="tRNA pseudouridine synthase A"/>
    <property type="match status" value="1"/>
</dbReference>
<dbReference type="FunFam" id="3.30.70.660:FF:000004">
    <property type="entry name" value="tRNA pseudouridine synthase A"/>
    <property type="match status" value="1"/>
</dbReference>
<dbReference type="Gene3D" id="3.30.70.660">
    <property type="entry name" value="Pseudouridine synthase I, catalytic domain, C-terminal subdomain"/>
    <property type="match status" value="1"/>
</dbReference>
<dbReference type="Gene3D" id="3.30.70.580">
    <property type="entry name" value="Pseudouridine synthase I, catalytic domain, N-terminal subdomain"/>
    <property type="match status" value="1"/>
</dbReference>
<dbReference type="HAMAP" id="MF_00171">
    <property type="entry name" value="TruA"/>
    <property type="match status" value="1"/>
</dbReference>
<dbReference type="InterPro" id="IPR020103">
    <property type="entry name" value="PsdUridine_synth_cat_dom_sf"/>
</dbReference>
<dbReference type="InterPro" id="IPR001406">
    <property type="entry name" value="PsdUridine_synth_TruA"/>
</dbReference>
<dbReference type="InterPro" id="IPR020097">
    <property type="entry name" value="PsdUridine_synth_TruA_a/b_dom"/>
</dbReference>
<dbReference type="InterPro" id="IPR020095">
    <property type="entry name" value="PsdUridine_synth_TruA_C"/>
</dbReference>
<dbReference type="InterPro" id="IPR020094">
    <property type="entry name" value="TruA/RsuA/RluB/E/F_N"/>
</dbReference>
<dbReference type="NCBIfam" id="TIGR00071">
    <property type="entry name" value="hisT_truA"/>
    <property type="match status" value="1"/>
</dbReference>
<dbReference type="PANTHER" id="PTHR11142">
    <property type="entry name" value="PSEUDOURIDYLATE SYNTHASE"/>
    <property type="match status" value="1"/>
</dbReference>
<dbReference type="PANTHER" id="PTHR11142:SF0">
    <property type="entry name" value="TRNA PSEUDOURIDINE SYNTHASE-LIKE 1"/>
    <property type="match status" value="1"/>
</dbReference>
<dbReference type="Pfam" id="PF01416">
    <property type="entry name" value="PseudoU_synth_1"/>
    <property type="match status" value="2"/>
</dbReference>
<dbReference type="PIRSF" id="PIRSF001430">
    <property type="entry name" value="tRNA_psdUrid_synth"/>
    <property type="match status" value="1"/>
</dbReference>
<dbReference type="SUPFAM" id="SSF55120">
    <property type="entry name" value="Pseudouridine synthase"/>
    <property type="match status" value="1"/>
</dbReference>
<sequence>MTRYKAIISYDGSGFFGYQVQPNTRTVQAEIEKALEKMHKGKSVRITASGRTDTGVHAKGQVIHFDSELDITAEKFQKALQVMTPFDISFLTVEEAPADFHARFGTVGKEYRYVIKRTKIFDPFSRNFALHYPYELDIAKMKQASERLIGEHDFTSFCSARTERDSKVRTLYSIDFYEEDAETLVIAFQGNGFLYNMVRILTGTLLDAGQGRISPDDITKALLAHDRQKLISKTAPPQGLYLWRVDYE</sequence>
<gene>
    <name evidence="1" type="primary">truA</name>
    <name type="ordered locus">lin2747</name>
</gene>
<protein>
    <recommendedName>
        <fullName evidence="1">tRNA pseudouridine synthase A</fullName>
        <ecNumber evidence="1">5.4.99.12</ecNumber>
    </recommendedName>
    <alternativeName>
        <fullName evidence="1">tRNA pseudouridine(38-40) synthase</fullName>
    </alternativeName>
    <alternativeName>
        <fullName evidence="1">tRNA pseudouridylate synthase I</fullName>
    </alternativeName>
    <alternativeName>
        <fullName evidence="1">tRNA-uridine isomerase I</fullName>
    </alternativeName>
</protein>
<feature type="chain" id="PRO_0000057402" description="tRNA pseudouridine synthase A">
    <location>
        <begin position="1"/>
        <end position="248"/>
    </location>
</feature>
<feature type="active site" description="Nucleophile" evidence="1">
    <location>
        <position position="53"/>
    </location>
</feature>
<feature type="binding site" evidence="1">
    <location>
        <position position="111"/>
    </location>
    <ligand>
        <name>substrate</name>
    </ligand>
</feature>
<name>TRUA_LISIN</name>
<organism>
    <name type="scientific">Listeria innocua serovar 6a (strain ATCC BAA-680 / CLIP 11262)</name>
    <dbReference type="NCBI Taxonomy" id="272626"/>
    <lineage>
        <taxon>Bacteria</taxon>
        <taxon>Bacillati</taxon>
        <taxon>Bacillota</taxon>
        <taxon>Bacilli</taxon>
        <taxon>Bacillales</taxon>
        <taxon>Listeriaceae</taxon>
        <taxon>Listeria</taxon>
    </lineage>
</organism>
<evidence type="ECO:0000255" key="1">
    <source>
        <dbReference type="HAMAP-Rule" id="MF_00171"/>
    </source>
</evidence>
<keyword id="KW-0413">Isomerase</keyword>
<keyword id="KW-0819">tRNA processing</keyword>
<reference key="1">
    <citation type="journal article" date="2001" name="Science">
        <title>Comparative genomics of Listeria species.</title>
        <authorList>
            <person name="Glaser P."/>
            <person name="Frangeul L."/>
            <person name="Buchrieser C."/>
            <person name="Rusniok C."/>
            <person name="Amend A."/>
            <person name="Baquero F."/>
            <person name="Berche P."/>
            <person name="Bloecker H."/>
            <person name="Brandt P."/>
            <person name="Chakraborty T."/>
            <person name="Charbit A."/>
            <person name="Chetouani F."/>
            <person name="Couve E."/>
            <person name="de Daruvar A."/>
            <person name="Dehoux P."/>
            <person name="Domann E."/>
            <person name="Dominguez-Bernal G."/>
            <person name="Duchaud E."/>
            <person name="Durant L."/>
            <person name="Dussurget O."/>
            <person name="Entian K.-D."/>
            <person name="Fsihi H."/>
            <person name="Garcia-del Portillo F."/>
            <person name="Garrido P."/>
            <person name="Gautier L."/>
            <person name="Goebel W."/>
            <person name="Gomez-Lopez N."/>
            <person name="Hain T."/>
            <person name="Hauf J."/>
            <person name="Jackson D."/>
            <person name="Jones L.-M."/>
            <person name="Kaerst U."/>
            <person name="Kreft J."/>
            <person name="Kuhn M."/>
            <person name="Kunst F."/>
            <person name="Kurapkat G."/>
            <person name="Madueno E."/>
            <person name="Maitournam A."/>
            <person name="Mata Vicente J."/>
            <person name="Ng E."/>
            <person name="Nedjari H."/>
            <person name="Nordsiek G."/>
            <person name="Novella S."/>
            <person name="de Pablos B."/>
            <person name="Perez-Diaz J.-C."/>
            <person name="Purcell R."/>
            <person name="Remmel B."/>
            <person name="Rose M."/>
            <person name="Schlueter T."/>
            <person name="Simoes N."/>
            <person name="Tierrez A."/>
            <person name="Vazquez-Boland J.-A."/>
            <person name="Voss H."/>
            <person name="Wehland J."/>
            <person name="Cossart P."/>
        </authorList>
    </citation>
    <scope>NUCLEOTIDE SEQUENCE [LARGE SCALE GENOMIC DNA]</scope>
    <source>
        <strain>ATCC BAA-680 / CLIP 11262</strain>
    </source>
</reference>
<accession>Q927P1</accession>